<organism>
    <name type="scientific">Naja kaouthia</name>
    <name type="common">Monocled cobra</name>
    <name type="synonym">Naja siamensis</name>
    <dbReference type="NCBI Taxonomy" id="8649"/>
    <lineage>
        <taxon>Eukaryota</taxon>
        <taxon>Metazoa</taxon>
        <taxon>Chordata</taxon>
        <taxon>Craniata</taxon>
        <taxon>Vertebrata</taxon>
        <taxon>Euteleostomi</taxon>
        <taxon>Lepidosauria</taxon>
        <taxon>Squamata</taxon>
        <taxon>Bifurcata</taxon>
        <taxon>Unidentata</taxon>
        <taxon>Episquamata</taxon>
        <taxon>Toxicofera</taxon>
        <taxon>Serpentes</taxon>
        <taxon>Colubroidea</taxon>
        <taxon>Elapidae</taxon>
        <taxon>Elapinae</taxon>
        <taxon>Naja</taxon>
    </lineage>
</organism>
<evidence type="ECO:0000250" key="1"/>
<evidence type="ECO:0000250" key="2">
    <source>
        <dbReference type="UniProtKB" id="P60301"/>
    </source>
</evidence>
<evidence type="ECO:0000250" key="3">
    <source>
        <dbReference type="UniProtKB" id="P60304"/>
    </source>
</evidence>
<evidence type="ECO:0000305" key="4"/>
<keyword id="KW-0123">Cardiotoxin</keyword>
<keyword id="KW-0204">Cytolysis</keyword>
<keyword id="KW-1015">Disulfide bond</keyword>
<keyword id="KW-0472">Membrane</keyword>
<keyword id="KW-0964">Secreted</keyword>
<keyword id="KW-0732">Signal</keyword>
<keyword id="KW-1052">Target cell membrane</keyword>
<keyword id="KW-1053">Target membrane</keyword>
<keyword id="KW-0800">Toxin</keyword>
<feature type="signal peptide" evidence="1">
    <location>
        <begin position="1"/>
        <end position="21"/>
    </location>
</feature>
<feature type="chain" id="PRO_0000035391" description="Cytotoxin 2">
    <location>
        <begin position="22"/>
        <end position="81"/>
    </location>
</feature>
<feature type="disulfide bond" evidence="2">
    <location>
        <begin position="24"/>
        <end position="42"/>
    </location>
</feature>
<feature type="disulfide bond" evidence="2">
    <location>
        <begin position="35"/>
        <end position="59"/>
    </location>
</feature>
<feature type="disulfide bond" evidence="2">
    <location>
        <begin position="63"/>
        <end position="74"/>
    </location>
</feature>
<feature type="disulfide bond" evidence="2">
    <location>
        <begin position="75"/>
        <end position="80"/>
    </location>
</feature>
<accession>Q9DGH9</accession>
<dbReference type="EMBL" id="AF295119">
    <property type="protein sequence ID" value="AAG02235.1"/>
    <property type="molecule type" value="mRNA"/>
</dbReference>
<dbReference type="SMR" id="Q9DGH9"/>
<dbReference type="GO" id="GO:0005576">
    <property type="term" value="C:extracellular region"/>
    <property type="evidence" value="ECO:0007669"/>
    <property type="project" value="UniProtKB-SubCell"/>
</dbReference>
<dbReference type="GO" id="GO:0016020">
    <property type="term" value="C:membrane"/>
    <property type="evidence" value="ECO:0007669"/>
    <property type="project" value="UniProtKB-KW"/>
</dbReference>
<dbReference type="GO" id="GO:0044218">
    <property type="term" value="C:other organism cell membrane"/>
    <property type="evidence" value="ECO:0007669"/>
    <property type="project" value="UniProtKB-KW"/>
</dbReference>
<dbReference type="GO" id="GO:0090729">
    <property type="term" value="F:toxin activity"/>
    <property type="evidence" value="ECO:0007669"/>
    <property type="project" value="UniProtKB-KW"/>
</dbReference>
<dbReference type="GO" id="GO:0031640">
    <property type="term" value="P:killing of cells of another organism"/>
    <property type="evidence" value="ECO:0007669"/>
    <property type="project" value="UniProtKB-KW"/>
</dbReference>
<dbReference type="CDD" id="cd00206">
    <property type="entry name" value="TFP_snake_toxin"/>
    <property type="match status" value="1"/>
</dbReference>
<dbReference type="FunFam" id="2.10.60.10:FF:000024">
    <property type="entry name" value="Cytotoxin 1"/>
    <property type="match status" value="1"/>
</dbReference>
<dbReference type="Gene3D" id="2.10.60.10">
    <property type="entry name" value="CD59"/>
    <property type="match status" value="1"/>
</dbReference>
<dbReference type="InterPro" id="IPR003572">
    <property type="entry name" value="Cytotoxin_Cobra"/>
</dbReference>
<dbReference type="InterPro" id="IPR003571">
    <property type="entry name" value="Snake_3FTx"/>
</dbReference>
<dbReference type="InterPro" id="IPR045860">
    <property type="entry name" value="Snake_toxin-like_sf"/>
</dbReference>
<dbReference type="InterPro" id="IPR018354">
    <property type="entry name" value="Snake_toxin_con_site"/>
</dbReference>
<dbReference type="InterPro" id="IPR054131">
    <property type="entry name" value="Toxin_cobra-type"/>
</dbReference>
<dbReference type="Pfam" id="PF21947">
    <property type="entry name" value="Toxin_cobra-type"/>
    <property type="match status" value="1"/>
</dbReference>
<dbReference type="PRINTS" id="PR00282">
    <property type="entry name" value="CYTOTOXIN"/>
</dbReference>
<dbReference type="SUPFAM" id="SSF57302">
    <property type="entry name" value="Snake toxin-like"/>
    <property type="match status" value="1"/>
</dbReference>
<dbReference type="PROSITE" id="PS00272">
    <property type="entry name" value="SNAKE_TOXIN"/>
    <property type="match status" value="1"/>
</dbReference>
<sequence length="81" mass="9005">MKTLLLTLVVVTIVCLDLGYTLKCNKLVPLFYKTCPAGKNLCYKIFMVATPKVPVKRGCIDVCPKNSALVKYVCCNTDRCN</sequence>
<proteinExistence type="inferred from homology"/>
<reference key="1">
    <citation type="submission" date="2000-08" db="EMBL/GenBank/DDBJ databases">
        <title>Molecular cloning and sequence analysis of cDNA of cytotoxin analog of Naja kaouthia.</title>
        <authorList>
            <person name="Li K.J."/>
            <person name="Wei J.F."/>
            <person name="Jin Y."/>
            <person name="Lu Q.M."/>
            <person name="Xiong Y.L."/>
            <person name="Wang W.Y."/>
        </authorList>
    </citation>
    <scope>NUCLEOTIDE SEQUENCE [MRNA]</scope>
    <source>
        <tissue>Venom gland</tissue>
    </source>
</reference>
<comment type="function">
    <text evidence="2 3">Shows cytolytic activity on many different cells by forming pore in lipid membranes. In vivo, increases heart rate or kills the animal by cardiac arrest. In addition, it binds to heparin with high affinity, interacts with Kv channel-interacting protein 1 (KCNIP1) in a calcium-independent manner, and binds to integrin alpha-V/beta-3 (ITGAV/ITGB3) with moderate affinity.</text>
</comment>
<comment type="subunit">
    <text evidence="2">Monomer in solution; Homodimer and oligomer in the presence of negatively charged lipids forming a pore with a size ranging between 20 and 30 Angstroms.</text>
</comment>
<comment type="subcellular location">
    <subcellularLocation>
        <location evidence="1">Secreted</location>
    </subcellularLocation>
    <subcellularLocation>
        <location evidence="2">Target cell membrane</location>
    </subcellularLocation>
</comment>
<comment type="tissue specificity">
    <text evidence="4">Expressed by the venom gland.</text>
</comment>
<comment type="miscellaneous">
    <text evidence="4">Is classified as a P-type cytotoxin, since a proline residue stands at position 51 (Pro-31 in standard classification).</text>
</comment>
<comment type="similarity">
    <text evidence="4">Belongs to the three-finger toxin family. Short-chain subfamily. Type IA cytotoxin sub-subfamily.</text>
</comment>
<name>3SA2_NAJKA</name>
<protein>
    <recommendedName>
        <fullName>Cytotoxin 2</fullName>
    </recommendedName>
</protein>